<protein>
    <recommendedName>
        <fullName>Protein phosphatase 1 regulatory subunit 3B</fullName>
    </recommendedName>
    <alternativeName>
        <fullName>33 kDa glycogen-binding protein</fullName>
    </alternativeName>
    <alternativeName>
        <fullName>Hepatic glycogen-targeting protein phosphatase 1 regulatory subunit GL</fullName>
    </alternativeName>
    <alternativeName>
        <fullName>Protein phosphatase 1 regulatory subunit 4</fullName>
        <shortName>PP1 subunit R4</shortName>
    </alternativeName>
    <alternativeName>
        <fullName>Protein phosphatase 1 subunit GL</fullName>
    </alternativeName>
</protein>
<organism>
    <name type="scientific">Rattus norvegicus</name>
    <name type="common">Rat</name>
    <dbReference type="NCBI Taxonomy" id="10116"/>
    <lineage>
        <taxon>Eukaryota</taxon>
        <taxon>Metazoa</taxon>
        <taxon>Chordata</taxon>
        <taxon>Craniata</taxon>
        <taxon>Vertebrata</taxon>
        <taxon>Euteleostomi</taxon>
        <taxon>Mammalia</taxon>
        <taxon>Eutheria</taxon>
        <taxon>Euarchontoglires</taxon>
        <taxon>Glires</taxon>
        <taxon>Rodentia</taxon>
        <taxon>Myomorpha</taxon>
        <taxon>Muroidea</taxon>
        <taxon>Muridae</taxon>
        <taxon>Murinae</taxon>
        <taxon>Rattus</taxon>
    </lineage>
</organism>
<feature type="chain" id="PRO_0000324545" description="Protein phosphatase 1 regulatory subunit 3B">
    <location>
        <begin position="1"/>
        <end position="284"/>
    </location>
</feature>
<feature type="domain" description="CBM21" evidence="2">
    <location>
        <begin position="124"/>
        <end position="232"/>
    </location>
</feature>
<feature type="short sequence motif" description="PP1-binding motif">
    <location>
        <begin position="61"/>
        <end position="64"/>
    </location>
</feature>
<feature type="modified residue" description="Phosphoserine" evidence="1">
    <location>
        <position position="260"/>
    </location>
</feature>
<feature type="sequence conflict" description="In Ref. 1; CAA77083." evidence="9" ref="1">
    <original>R</original>
    <variation>S</variation>
    <location>
        <position position="162"/>
    </location>
</feature>
<gene>
    <name type="primary">Ppp1r3b</name>
    <name type="synonym">Ppp1r4</name>
</gene>
<evidence type="ECO:0000250" key="1">
    <source>
        <dbReference type="UniProtKB" id="Q8C767"/>
    </source>
</evidence>
<evidence type="ECO:0000255" key="2">
    <source>
        <dbReference type="PROSITE-ProRule" id="PRU00491"/>
    </source>
</evidence>
<evidence type="ECO:0000269" key="3">
    <source>
    </source>
</evidence>
<evidence type="ECO:0000269" key="4">
    <source>
    </source>
</evidence>
<evidence type="ECO:0000269" key="5">
    <source>
    </source>
</evidence>
<evidence type="ECO:0000269" key="6">
    <source>
    </source>
</evidence>
<evidence type="ECO:0000269" key="7">
    <source>
    </source>
</evidence>
<evidence type="ECO:0000269" key="8">
    <source>
    </source>
</evidence>
<evidence type="ECO:0000305" key="9"/>
<name>PPR3B_RAT</name>
<reference key="1">
    <citation type="journal article" date="1995" name="FEBS Lett.">
        <title>Amino acid sequence and expression of the hepatic glycogen-binding (GL)-subunit of protein phosphatase-1.</title>
        <authorList>
            <person name="Doherty M.J."/>
            <person name="Moorhead G."/>
            <person name="Morrice N."/>
            <person name="Cohen P."/>
            <person name="Cohen P.T.W."/>
        </authorList>
    </citation>
    <scope>NUCLEOTIDE SEQUENCE [MRNA]</scope>
    <scope>PROTEIN SEQUENCE OF 42-56; 61-98; 150-157; 161-169; 181-199; 201-220; 238-259 AND 280-284</scope>
    <scope>FUNCTION</scope>
    <scope>INTERACTION WITH PYGL</scope>
    <scope>TISSUE SPECIFICITY</scope>
    <source>
        <strain>Sprague-Dawley</strain>
        <tissue>Liver</tissue>
    </source>
</reference>
<reference key="2">
    <citation type="journal article" date="2004" name="Genome Res.">
        <title>The status, quality, and expansion of the NIH full-length cDNA project: the Mammalian Gene Collection (MGC).</title>
        <authorList>
            <consortium name="The MGC Project Team"/>
        </authorList>
    </citation>
    <scope>NUCLEOTIDE SEQUENCE [LARGE SCALE MRNA]</scope>
    <source>
        <tissue>Heart</tissue>
    </source>
</reference>
<reference key="3">
    <citation type="journal article" date="1995" name="FEBS Lett.">
        <title>Purification of the hepatic glycogen-associated form of protein phosphatase-1 by microcystin-Sepharose affinity chromatography.</title>
        <authorList>
            <person name="Moorhead G."/>
            <person name="MacKintosh C."/>
            <person name="Morrice N."/>
            <person name="Cohen P."/>
        </authorList>
    </citation>
    <scope>PROTEIN SEQUENCE OF 61-76 AND 150-157</scope>
    <scope>INTERACTION WITH PPP1CC AND PYGL</scope>
    <scope>ASSOCIATION WITH GLYCOGEN</scope>
</reference>
<reference key="4">
    <citation type="journal article" date="1998" name="Biochem. J.">
        <title>Identification of the separate domains in the hepatic glycogen-targeting subunit of protein phosphatase 1 that interact with phosphorylase a, glycogen and protein phosphatase 1.</title>
        <authorList>
            <person name="Armstrong C.G."/>
            <person name="Doherty M.J."/>
            <person name="Cohen P.T.W."/>
        </authorList>
    </citation>
    <scope>INTERACTION WITH GLYCOGEN; PPP1CC AND PYGL</scope>
</reference>
<reference key="5">
    <citation type="journal article" date="2000" name="J. Biol. Chem.">
        <title>Distinctive regulatory and metabolic properties of glycogen-targeting subunits of protein phosphatase-1 (PTG, GL, GM/RGl) expressed in hepatocytes.</title>
        <authorList>
            <person name="Gasa R."/>
            <person name="Jensen P.B."/>
            <person name="Berman H.K."/>
            <person name="Brady M.J."/>
            <person name="DePaoli-Roach A.A."/>
            <person name="Newgard C.B."/>
        </authorList>
    </citation>
    <scope>FUNCTION</scope>
</reference>
<reference key="6">
    <citation type="journal article" date="2002" name="Diabetes">
        <title>Human skeletal muscle expresses a glycogen-targeting subunit of PP1 that is identical to the insulin-sensitive glycogen-targeting subunit G(L) of liver.</title>
        <authorList>
            <person name="Munro S."/>
            <person name="Cuthbertson D.J."/>
            <person name="Cunningham J."/>
            <person name="Sales M."/>
            <person name="Cohen P.T.W."/>
        </authorList>
    </citation>
    <scope>TISSUE SPECIFICITY</scope>
</reference>
<reference key="7">
    <citation type="journal article" date="2007" name="Biochem. J.">
        <title>Expression and glycogenic effect of glycogen-targeting protein phosphatase 1 regulatory subunit GL in cultured human muscle.</title>
        <authorList>
            <person name="Montori-Grau M."/>
            <person name="Guitart M."/>
            <person name="Lerin C."/>
            <person name="Andreu A.L."/>
            <person name="Newgard C.B."/>
            <person name="Garcia-Martinez C."/>
            <person name="Gomez-Foix A.M."/>
        </authorList>
    </citation>
    <scope>FUNCTION</scope>
</reference>
<proteinExistence type="evidence at protein level"/>
<sequence length="284" mass="32626">MAVDIEYSYSSMAPSLRRERFTFKISPKLNKPLRPCIQLGSKDEAGRMVAPTVQEKKVKKRVSFADNQGLALTMVKVFSEFDDPLDIPFNITELLDNIVSLTTAESESFVLDFPQPSADYLDFRNRLQTNHVCLENCVLKEKAIAGTVKVQNLAFEKVVKIRMTFDTWKSFTDFPCQYVKDTYAGSDRDTFSFDISLPEKIQSYERMEFAVCYECNGQSYWDSNKGKNYRITRAELRSTQGMTEPYNGPDFGISFDQFGSPRCSFGLFPEWPSYLGYEKLGPYY</sequence>
<accession>Q6IN01</accession>
<accession>Q63759</accession>
<dbReference type="EMBL" id="Y18208">
    <property type="protein sequence ID" value="CAA77083.1"/>
    <property type="molecule type" value="mRNA"/>
</dbReference>
<dbReference type="EMBL" id="BC072514">
    <property type="protein sequence ID" value="AAH72514.1"/>
    <property type="molecule type" value="mRNA"/>
</dbReference>
<dbReference type="PIR" id="S68216">
    <property type="entry name" value="S68216"/>
</dbReference>
<dbReference type="RefSeq" id="NP_001421361.1">
    <property type="nucleotide sequence ID" value="NM_001434432.1"/>
</dbReference>
<dbReference type="RefSeq" id="NP_001421362.1">
    <property type="nucleotide sequence ID" value="NM_001434433.1"/>
</dbReference>
<dbReference type="RefSeq" id="NP_620267.2">
    <property type="nucleotide sequence ID" value="NM_138912.2"/>
</dbReference>
<dbReference type="RefSeq" id="XP_006253277.1">
    <property type="nucleotide sequence ID" value="XM_006253215.2"/>
</dbReference>
<dbReference type="RefSeq" id="XP_006253278.1">
    <property type="nucleotide sequence ID" value="XM_006253216.3"/>
</dbReference>
<dbReference type="SMR" id="Q6IN01"/>
<dbReference type="FunCoup" id="Q6IN01">
    <property type="interactions" value="492"/>
</dbReference>
<dbReference type="IntAct" id="Q6IN01">
    <property type="interactions" value="1"/>
</dbReference>
<dbReference type="STRING" id="10116.ENSRNOP00000042713"/>
<dbReference type="CAZy" id="CBM21">
    <property type="family name" value="Carbohydrate-Binding Module Family 21"/>
</dbReference>
<dbReference type="iPTMnet" id="Q6IN01"/>
<dbReference type="PhosphoSitePlus" id="Q6IN01"/>
<dbReference type="PaxDb" id="10116-ENSRNOP00000042713"/>
<dbReference type="DNASU" id="192280"/>
<dbReference type="Ensembl" id="ENSRNOT00000051720.3">
    <property type="protein sequence ID" value="ENSRNOP00000042713.2"/>
    <property type="gene ID" value="ENSRNOG00000011474.6"/>
</dbReference>
<dbReference type="GeneID" id="192280"/>
<dbReference type="KEGG" id="rno:192280"/>
<dbReference type="UCSC" id="RGD:621600">
    <property type="organism name" value="rat"/>
</dbReference>
<dbReference type="AGR" id="RGD:621600"/>
<dbReference type="CTD" id="79660"/>
<dbReference type="RGD" id="621600">
    <property type="gene designation" value="Ppp1r3b"/>
</dbReference>
<dbReference type="eggNOG" id="KOG3986">
    <property type="taxonomic scope" value="Eukaryota"/>
</dbReference>
<dbReference type="GeneTree" id="ENSGT00940000159475"/>
<dbReference type="HOGENOM" id="CLU_040215_2_1_1"/>
<dbReference type="InParanoid" id="Q6IN01"/>
<dbReference type="OMA" id="YRIIQAE"/>
<dbReference type="OrthoDB" id="8942186at2759"/>
<dbReference type="PhylomeDB" id="Q6IN01"/>
<dbReference type="TreeFam" id="TF105537"/>
<dbReference type="PRO" id="PR:Q6IN01"/>
<dbReference type="Proteomes" id="UP000002494">
    <property type="component" value="Chromosome 16"/>
</dbReference>
<dbReference type="Bgee" id="ENSRNOG00000011474">
    <property type="expression patterns" value="Expressed in liver and 19 other cell types or tissues"/>
</dbReference>
<dbReference type="GO" id="GO:0042587">
    <property type="term" value="C:glycogen granule"/>
    <property type="evidence" value="ECO:0000314"/>
    <property type="project" value="RGD"/>
</dbReference>
<dbReference type="GO" id="GO:0000164">
    <property type="term" value="C:protein phosphatase type 1 complex"/>
    <property type="evidence" value="ECO:0000314"/>
    <property type="project" value="RGD"/>
</dbReference>
<dbReference type="GO" id="GO:0050196">
    <property type="term" value="F:[phosphorylase] phosphatase activity"/>
    <property type="evidence" value="ECO:0000315"/>
    <property type="project" value="UniProtKB"/>
</dbReference>
<dbReference type="GO" id="GO:0019899">
    <property type="term" value="F:enzyme binding"/>
    <property type="evidence" value="ECO:0000314"/>
    <property type="project" value="RGD"/>
</dbReference>
<dbReference type="GO" id="GO:2001069">
    <property type="term" value="F:glycogen binding"/>
    <property type="evidence" value="ECO:0000318"/>
    <property type="project" value="GO_Central"/>
</dbReference>
<dbReference type="GO" id="GO:0008157">
    <property type="term" value="F:protein phosphatase 1 binding"/>
    <property type="evidence" value="ECO:0000318"/>
    <property type="project" value="GO_Central"/>
</dbReference>
<dbReference type="GO" id="GO:0019888">
    <property type="term" value="F:protein phosphatase regulator activity"/>
    <property type="evidence" value="ECO:0000314"/>
    <property type="project" value="RGD"/>
</dbReference>
<dbReference type="GO" id="GO:0005977">
    <property type="term" value="P:glycogen metabolic process"/>
    <property type="evidence" value="ECO:0007669"/>
    <property type="project" value="UniProtKB-KW"/>
</dbReference>
<dbReference type="GO" id="GO:0045818">
    <property type="term" value="P:negative regulation of glycogen catabolic process"/>
    <property type="evidence" value="ECO:0000266"/>
    <property type="project" value="RGD"/>
</dbReference>
<dbReference type="GO" id="GO:0045725">
    <property type="term" value="P:positive regulation of glycogen biosynthetic process"/>
    <property type="evidence" value="ECO:0000266"/>
    <property type="project" value="RGD"/>
</dbReference>
<dbReference type="GO" id="GO:0005979">
    <property type="term" value="P:regulation of glycogen biosynthetic process"/>
    <property type="evidence" value="ECO:0000314"/>
    <property type="project" value="RGD"/>
</dbReference>
<dbReference type="GO" id="GO:0005981">
    <property type="term" value="P:regulation of glycogen catabolic process"/>
    <property type="evidence" value="ECO:0000314"/>
    <property type="project" value="RGD"/>
</dbReference>
<dbReference type="CDD" id="cd22814">
    <property type="entry name" value="PBD_PPP1R3B"/>
    <property type="match status" value="1"/>
</dbReference>
<dbReference type="FunFam" id="2.60.40.2440:FF:000001">
    <property type="entry name" value="Protein phosphatase 1 regulatory subunit 3C"/>
    <property type="match status" value="1"/>
</dbReference>
<dbReference type="Gene3D" id="2.60.40.2440">
    <property type="entry name" value="Carbohydrate binding type-21 domain"/>
    <property type="match status" value="1"/>
</dbReference>
<dbReference type="InterPro" id="IPR005036">
    <property type="entry name" value="CBM21_dom"/>
</dbReference>
<dbReference type="InterPro" id="IPR038175">
    <property type="entry name" value="CBM21_dom_sf"/>
</dbReference>
<dbReference type="InterPro" id="IPR017434">
    <property type="entry name" value="Pase-1_reg-su_3B/C/D_met"/>
</dbReference>
<dbReference type="InterPro" id="IPR030682">
    <property type="entry name" value="PP1_3B"/>
</dbReference>
<dbReference type="InterPro" id="IPR050782">
    <property type="entry name" value="PP1_regulatory_subunit_3"/>
</dbReference>
<dbReference type="PANTHER" id="PTHR12307">
    <property type="entry name" value="PROTEIN PHOSPHATASE 1 REGULATORY SUBUNIT"/>
    <property type="match status" value="1"/>
</dbReference>
<dbReference type="PANTHER" id="PTHR12307:SF13">
    <property type="entry name" value="PROTEIN PHOSPHATASE 1 REGULATORY SUBUNIT 3B"/>
    <property type="match status" value="1"/>
</dbReference>
<dbReference type="Pfam" id="PF03370">
    <property type="entry name" value="CBM_21"/>
    <property type="match status" value="1"/>
</dbReference>
<dbReference type="PIRSF" id="PIRSF500814">
    <property type="entry name" value="PP1_GL"/>
    <property type="match status" value="1"/>
</dbReference>
<dbReference type="PIRSF" id="PIRSF038207">
    <property type="entry name" value="PP1_GT_animal"/>
    <property type="match status" value="1"/>
</dbReference>
<dbReference type="PROSITE" id="PS51159">
    <property type="entry name" value="CBM21"/>
    <property type="match status" value="1"/>
</dbReference>
<comment type="function">
    <text evidence="3 5 6">Acts as a glycogen-targeting subunit for phosphatase PP1. Facilitates interaction of the PP1 with enzymes of the glycogen metabolism and regulates its activity. Suppresses the rate at which PP1 dephosphorylates (inactivates) glycogen phosphorylase and enhances the rate at which it activates glycogen synthase and therefore limits glycogen breakdown. Its activity is inhibited by PYGL, resulting in inhibition of the glycogen synthase and glycogen phosphorylase phosphatase activities of PP1. Dramatically increases basal and insulin-stimulated glycogen synthesis upon overexpression in hepatocytes.</text>
</comment>
<comment type="subunit">
    <text evidence="6 7 8">Interacts with glycogen, PPP1CC catalytic subunit of PP1 and PYGL. Associates with glycogen particles. Forms complexes with debranching enzyme, glycogen phosphorylase, glycogen synthase and phosphorylase kinase which is necessary for its regulation of PP1 activity.</text>
</comment>
<comment type="tissue specificity">
    <text evidence="4 6">Highly expressed in liver. Moderately expressed in kidney, heart, testis, spleen and lung. Weakly expressed in skeletal muscle (at protein level). Expressed predominantly in liver. Expressed moderately in heart. Expressed weakly in lung, kidney, spleen and skeletal muscle.</text>
</comment>
<comment type="domain">
    <text>The PP1-binding domain is located between residues 59 and 94. The glycogen-binding domain is located between residues 94 and 257. The PYGL-binding site lies in the C-terminal 16 amino acids.</text>
</comment>
<keyword id="KW-0119">Carbohydrate metabolism</keyword>
<keyword id="KW-0903">Direct protein sequencing</keyword>
<keyword id="KW-0321">Glycogen metabolism</keyword>
<keyword id="KW-0597">Phosphoprotein</keyword>
<keyword id="KW-1185">Reference proteome</keyword>